<dbReference type="EMBL" id="Z67753">
    <property type="protein sequence ID" value="CAA91723.1"/>
    <property type="molecule type" value="Genomic_DNA"/>
</dbReference>
<dbReference type="PIR" id="S78350">
    <property type="entry name" value="S78350"/>
</dbReference>
<dbReference type="RefSeq" id="NP_043691.1">
    <property type="nucleotide sequence ID" value="NC_001713.1"/>
</dbReference>
<dbReference type="SMR" id="P49513"/>
<dbReference type="GeneID" id="801735"/>
<dbReference type="GO" id="GO:0009535">
    <property type="term" value="C:chloroplast thylakoid membrane"/>
    <property type="evidence" value="ECO:0007669"/>
    <property type="project" value="UniProtKB-SubCell"/>
</dbReference>
<dbReference type="GO" id="GO:0009539">
    <property type="term" value="C:photosystem II reaction center"/>
    <property type="evidence" value="ECO:0007669"/>
    <property type="project" value="InterPro"/>
</dbReference>
<dbReference type="GO" id="GO:0015979">
    <property type="term" value="P:photosynthesis"/>
    <property type="evidence" value="ECO:0007669"/>
    <property type="project" value="UniProtKB-UniRule"/>
</dbReference>
<dbReference type="HAMAP" id="MF_00441">
    <property type="entry name" value="PSII_PsbK"/>
    <property type="match status" value="1"/>
</dbReference>
<dbReference type="InterPro" id="IPR003687">
    <property type="entry name" value="PSII_PsbK"/>
</dbReference>
<dbReference type="InterPro" id="IPR037270">
    <property type="entry name" value="PSII_PsbK_sf"/>
</dbReference>
<dbReference type="NCBIfam" id="NF002715">
    <property type="entry name" value="PRK02553.1"/>
    <property type="match status" value="1"/>
</dbReference>
<dbReference type="PANTHER" id="PTHR35325">
    <property type="match status" value="1"/>
</dbReference>
<dbReference type="PANTHER" id="PTHR35325:SF1">
    <property type="entry name" value="PHOTOSYSTEM II REACTION CENTER PROTEIN K"/>
    <property type="match status" value="1"/>
</dbReference>
<dbReference type="Pfam" id="PF02533">
    <property type="entry name" value="PsbK"/>
    <property type="match status" value="1"/>
</dbReference>
<dbReference type="SUPFAM" id="SSF161037">
    <property type="entry name" value="Photosystem II reaction center protein K, PsbK"/>
    <property type="match status" value="1"/>
</dbReference>
<protein>
    <recommendedName>
        <fullName evidence="1">Photosystem II reaction center protein K</fullName>
        <shortName evidence="1">PSII-K</shortName>
    </recommendedName>
</protein>
<sequence length="44" mass="4976">MESLLLARLPEAYVVFSPIVDVLPIIPVFFLLLAFVWQAAIGFR</sequence>
<reference key="1">
    <citation type="journal article" date="1995" name="Plant Mol. Biol. Rep.">
        <title>The chloroplast genome of a chlorophyll a+c-containing alga, Odontella sinensis.</title>
        <authorList>
            <person name="Kowallik K.V."/>
            <person name="Stoebe B."/>
            <person name="Schaffran I."/>
            <person name="Kroth-Pancic P."/>
            <person name="Freier U."/>
        </authorList>
    </citation>
    <scope>NUCLEOTIDE SEQUENCE [LARGE SCALE GENOMIC DNA]</scope>
</reference>
<evidence type="ECO:0000255" key="1">
    <source>
        <dbReference type="HAMAP-Rule" id="MF_00441"/>
    </source>
</evidence>
<feature type="propeptide" id="PRO_0000029495" evidence="1">
    <location>
        <begin position="1"/>
        <end position="7"/>
    </location>
</feature>
<feature type="chain" id="PRO_0000029496" description="Photosystem II reaction center protein K" evidence="1">
    <location>
        <begin position="8"/>
        <end position="44"/>
    </location>
</feature>
<feature type="transmembrane region" description="Helical" evidence="1">
    <location>
        <begin position="23"/>
        <end position="43"/>
    </location>
</feature>
<name>PSBK_TRICV</name>
<comment type="function">
    <text evidence="1">One of the components of the core complex of photosystem II (PSII). PSII is a light-driven water:plastoquinone oxidoreductase that uses light energy to abstract electrons from H(2)O, generating O(2) and a proton gradient subsequently used for ATP formation. It consists of a core antenna complex that captures photons, and an electron transfer chain that converts photonic excitation into a charge separation.</text>
</comment>
<comment type="subunit">
    <text evidence="1">PSII is composed of 1 copy each of membrane proteins PsbA, PsbB, PsbC, PsbD, PsbE, PsbF, PsbH, PsbI, PsbJ, PsbK, PsbL, PsbM, PsbT, PsbX, PsbY, PsbZ, Psb30/Ycf12, at least 3 peripheral proteins of the oxygen-evolving complex and a large number of cofactors. It forms dimeric complexes.</text>
</comment>
<comment type="subcellular location">
    <subcellularLocation>
        <location evidence="1">Plastid</location>
        <location evidence="1">Chloroplast thylakoid membrane</location>
        <topology evidence="1">Single-pass membrane protein</topology>
    </subcellularLocation>
</comment>
<comment type="similarity">
    <text evidence="1">Belongs to the PsbK family.</text>
</comment>
<accession>P49513</accession>
<proteinExistence type="inferred from homology"/>
<gene>
    <name evidence="1" type="primary">psbK</name>
</gene>
<keyword id="KW-0150">Chloroplast</keyword>
<keyword id="KW-0472">Membrane</keyword>
<keyword id="KW-0602">Photosynthesis</keyword>
<keyword id="KW-0604">Photosystem II</keyword>
<keyword id="KW-0934">Plastid</keyword>
<keyword id="KW-0674">Reaction center</keyword>
<keyword id="KW-0793">Thylakoid</keyword>
<keyword id="KW-0812">Transmembrane</keyword>
<keyword id="KW-1133">Transmembrane helix</keyword>
<organism>
    <name type="scientific">Trieres chinensis</name>
    <name type="common">Marine centric diatom</name>
    <name type="synonym">Odontella sinensis</name>
    <dbReference type="NCBI Taxonomy" id="1514140"/>
    <lineage>
        <taxon>Eukaryota</taxon>
        <taxon>Sar</taxon>
        <taxon>Stramenopiles</taxon>
        <taxon>Ochrophyta</taxon>
        <taxon>Bacillariophyta</taxon>
        <taxon>Mediophyceae</taxon>
        <taxon>Biddulphiophycidae</taxon>
        <taxon>Eupodiscales</taxon>
        <taxon>Parodontellaceae</taxon>
        <taxon>Trieres</taxon>
    </lineage>
</organism>
<geneLocation type="chloroplast"/>